<name>AMML_ASTMO</name>
<sequence length="15" mass="1517">ESGINLQGDATLANN</sequence>
<reference evidence="3" key="1">
    <citation type="journal article" date="2005" name="Arch. Biochem. Biophys.">
        <title>A novel homodimeric lectin from Astragalus mongholicus with antifungal activity.</title>
        <authorList>
            <person name="Yan Q."/>
            <person name="Jiang Z."/>
            <person name="Yang S."/>
            <person name="Deng W."/>
            <person name="Han L."/>
        </authorList>
    </citation>
    <scope>PROTEIN SEQUENCE</scope>
    <scope>FUNCTION</scope>
    <scope>SUBUNIT</scope>
    <scope>GLYCOSYLATION</scope>
</reference>
<evidence type="ECO:0000269" key="1">
    <source>
    </source>
</evidence>
<evidence type="ECO:0000303" key="2">
    <source>
    </source>
</evidence>
<evidence type="ECO:0000305" key="3"/>
<comment type="function">
    <text evidence="1">Lectin that binds strongly to galactose, lactose, D-raffinose, L-rhamnose and cellobiose, and less strongly to D-glucose, D-xylose and L-arabinose. Does not bind D-galacturonic acid, D-fructose, D-mannose, D-ribose, L-sorbose, maltose and sucrose. Has hemagglutinating activity towards human type O and rabbit erythrocytes. Has strong antifungal activity against B.cinera with an IC(50) value of 1.2 uM, and weaker antifungal activity against D.turcia, F.oxysporum and Colletorichum sp. Lacks antifungal activity against F.oxysporum and M.arachidicola.</text>
</comment>
<comment type="subunit">
    <text evidence="1">Homodimer.</text>
</comment>
<comment type="PTM">
    <text evidence="1">Glycosylated.</text>
</comment>
<comment type="miscellaneous">
    <text evidence="1">Hemagglutinating activity stable when incubated at 65 degrees Celsius for 30 minutes. Hemagglutinating activity is reduced by 50% when incubated at 75 degrees Celsius for 30 minutes and is abolished by incubation at 85 degrees Celsius for 30 minutes. Hemagglutinating activity is stable between pH 4.5 and 7.5, but is completely inhibited by incubation below pH 3.0 or above pH 10.</text>
</comment>
<proteinExistence type="evidence at protein level"/>
<dbReference type="GO" id="GO:0005536">
    <property type="term" value="F:D-glucose binding"/>
    <property type="evidence" value="ECO:0000314"/>
    <property type="project" value="UniProtKB"/>
</dbReference>
<dbReference type="GO" id="GO:0005534">
    <property type="term" value="F:galactose binding"/>
    <property type="evidence" value="ECO:0000314"/>
    <property type="project" value="UniProtKB"/>
</dbReference>
<dbReference type="GO" id="GO:0050832">
    <property type="term" value="P:defense response to fungus"/>
    <property type="evidence" value="ECO:0000314"/>
    <property type="project" value="UniProtKB"/>
</dbReference>
<dbReference type="GO" id="GO:0031640">
    <property type="term" value="P:killing of cells of another organism"/>
    <property type="evidence" value="ECO:0007669"/>
    <property type="project" value="UniProtKB-KW"/>
</dbReference>
<protein>
    <recommendedName>
        <fullName>Antifungal lectin AMML</fullName>
    </recommendedName>
</protein>
<feature type="chain" id="PRO_0000253931" description="Antifungal lectin AMML">
    <location>
        <begin position="1"/>
        <end position="15" status="greater than"/>
    </location>
</feature>
<feature type="non-terminal residue" evidence="2">
    <location>
        <position position="15"/>
    </location>
</feature>
<organism>
    <name type="scientific">Astragalus mongholicus</name>
    <name type="common">Milk vetch</name>
    <name type="synonym">Astragalus membranaceus var. mongholicus</name>
    <dbReference type="NCBI Taxonomy" id="119829"/>
    <lineage>
        <taxon>Eukaryota</taxon>
        <taxon>Viridiplantae</taxon>
        <taxon>Streptophyta</taxon>
        <taxon>Embryophyta</taxon>
        <taxon>Tracheophyta</taxon>
        <taxon>Spermatophyta</taxon>
        <taxon>Magnoliopsida</taxon>
        <taxon>eudicotyledons</taxon>
        <taxon>Gunneridae</taxon>
        <taxon>Pentapetalae</taxon>
        <taxon>rosids</taxon>
        <taxon>fabids</taxon>
        <taxon>Fabales</taxon>
        <taxon>Fabaceae</taxon>
        <taxon>Papilionoideae</taxon>
        <taxon>50 kb inversion clade</taxon>
        <taxon>NPAAA clade</taxon>
        <taxon>Hologalegina</taxon>
        <taxon>IRL clade</taxon>
        <taxon>Galegeae</taxon>
        <taxon>Astragalus</taxon>
    </lineage>
</organism>
<keyword id="KW-0929">Antimicrobial</keyword>
<keyword id="KW-0903">Direct protein sequencing</keyword>
<keyword id="KW-0295">Fungicide</keyword>
<keyword id="KW-0325">Glycoprotein</keyword>
<keyword id="KW-0348">Hemagglutinin</keyword>
<keyword id="KW-0430">Lectin</keyword>
<keyword id="KW-0611">Plant defense</keyword>
<accession>P85004</accession>